<reference key="1">
    <citation type="journal article" date="2006" name="Proc. Natl. Acad. Sci. U.S.A.">
        <title>Genome reduction in Leptospira borgpetersenii reflects limited transmission potential.</title>
        <authorList>
            <person name="Bulach D.M."/>
            <person name="Zuerner R.L."/>
            <person name="Wilson P."/>
            <person name="Seemann T."/>
            <person name="McGrath A."/>
            <person name="Cullen P.A."/>
            <person name="Davis J."/>
            <person name="Johnson M."/>
            <person name="Kuczek E."/>
            <person name="Alt D.P."/>
            <person name="Peterson-Burch B."/>
            <person name="Coppel R.L."/>
            <person name="Rood J.I."/>
            <person name="Davies J.K."/>
            <person name="Adler B."/>
        </authorList>
    </citation>
    <scope>NUCLEOTIDE SEQUENCE [LARGE SCALE GENOMIC DNA]</scope>
    <source>
        <strain>L550</strain>
    </source>
</reference>
<comment type="function">
    <text evidence="1">DNA-dependent RNA polymerase catalyzes the transcription of DNA into RNA using the four ribonucleoside triphosphates as substrates.</text>
</comment>
<comment type="catalytic activity">
    <reaction evidence="1">
        <text>RNA(n) + a ribonucleoside 5'-triphosphate = RNA(n+1) + diphosphate</text>
        <dbReference type="Rhea" id="RHEA:21248"/>
        <dbReference type="Rhea" id="RHEA-COMP:14527"/>
        <dbReference type="Rhea" id="RHEA-COMP:17342"/>
        <dbReference type="ChEBI" id="CHEBI:33019"/>
        <dbReference type="ChEBI" id="CHEBI:61557"/>
        <dbReference type="ChEBI" id="CHEBI:140395"/>
        <dbReference type="EC" id="2.7.7.6"/>
    </reaction>
</comment>
<comment type="subunit">
    <text evidence="1">The RNAP catalytic core consists of 2 alpha, 1 beta, 1 beta' and 1 omega subunit. When a sigma factor is associated with the core the holoenzyme is formed, which can initiate transcription.</text>
</comment>
<comment type="similarity">
    <text evidence="1">Belongs to the RNA polymerase beta chain family.</text>
</comment>
<name>RPOB_LEPBL</name>
<organism>
    <name type="scientific">Leptospira borgpetersenii serovar Hardjo-bovis (strain L550)</name>
    <dbReference type="NCBI Taxonomy" id="355276"/>
    <lineage>
        <taxon>Bacteria</taxon>
        <taxon>Pseudomonadati</taxon>
        <taxon>Spirochaetota</taxon>
        <taxon>Spirochaetia</taxon>
        <taxon>Leptospirales</taxon>
        <taxon>Leptospiraceae</taxon>
        <taxon>Leptospira</taxon>
    </lineage>
</organism>
<gene>
    <name evidence="1" type="primary">rpoB</name>
    <name type="ordered locus">LBL_0743</name>
</gene>
<evidence type="ECO:0000255" key="1">
    <source>
        <dbReference type="HAMAP-Rule" id="MF_01321"/>
    </source>
</evidence>
<feature type="chain" id="PRO_0000300339" description="DNA-directed RNA polymerase subunit beta">
    <location>
        <begin position="1"/>
        <end position="1226"/>
    </location>
</feature>
<sequence length="1226" mass="137683">MYGQVERKRVNFGKITNLDYLPNLIQIQKRSFDWFLQADVKDETKRKHQGLEAVFRETFPIESPNNDMIMEYSHYILGEPKRSPQECKDTDATFAMPLKAVIRLIIKETGEIREQTVYMGDLPVMTEQGTFIINGAERVVVSQLHRSPGIFFSYDMERDVFSARVIPYRGSWLEFEMDNKGILIAKIDRKKKFPATLLIKSLGHGTNEEVLRLFYSSKKEKIAGATSKDLKKILGRRTINDIINMETGEVMLEAGSKVNEDNISILKEMKVKEVELIEFPKGKDNPILINALEKDGVNDYEDAILKFHSLMRQGEPSTIENATTELTRLFFSPKTFDLGEVGRYKINSKFEFNNPKEFSGEKARVLRPADIIETVRYILNLFSETENYYPDDIDHLGNRRIRSVGELISNQLKTGFSRVERVIKERMTVQEIETQTPQLLISIKPITAVINEFFGSSQLSQFMDQTNPLAELTHKRRLNALGPGGLSRDRAGMEVRDVHYSHYGRMCPIETPEGPNIGLILSMSSYARVNDYGFLETPYRTVKNGKVTGQIEHLTADKEEYHYIAQASGVIDEKGELKNKLISTRHRGDFPFRNPSEIQYMDLAPLQVVSVSTALIPFLEHDDANRALMGSNMQRQAVPLLREEAPFVGTGMETRAAYDSRICIVNKHDGVVTSVDAETIVVERKGGKESDTYSLTKFKKTNQGTCFNQKPIVGVVHSEINGKVSKVSKEKIEVTGENGELKEYVLQIGSKQYAPIVSSGEEVKRGTTLAGQVVVGEKLDEMGNILVKGTVLADGPAVDNGVLALGRNVLAAFMPWEGYNFEDAILISERIVRDDVFSSIHIEEFEIQARETKLGPEQITRDIPNLSDKAFRDLDETGVIRIGAEVKPGDILVGMVTPKGETDLTPEYKLLHSIFGEKAKDVRDSSLRMPNGFEGTVIDIKRFSRENQDELPAGVEEMVKVFVARKRKLLVGDKMAGRHGNKGVVARVMAEEDMPYMEDGTPLDIVLNPLGVPSRMNLGQIFETQLGFAASKLGISFETPVFDGAEESDVDNFCKEANLPLNSKFKLYDGRTGLPFMNEVFCGYIYILKLAHLVEDKIHARSTGPYSLVTQQPLGGKAQFGGQRLGEMEVWALEAYGASHTLQELLTIKSDDMLGRARIYEAIVKGIHSIKPGIPESFNVLVQELRGLALDIIITDSEGNTVDISDYEDEYSKSKKKIKFETIENA</sequence>
<keyword id="KW-0240">DNA-directed RNA polymerase</keyword>
<keyword id="KW-0548">Nucleotidyltransferase</keyword>
<keyword id="KW-0804">Transcription</keyword>
<keyword id="KW-0808">Transferase</keyword>
<accession>Q054E2</accession>
<protein>
    <recommendedName>
        <fullName evidence="1">DNA-directed RNA polymerase subunit beta</fullName>
        <shortName evidence="1">RNAP subunit beta</shortName>
        <ecNumber evidence="1">2.7.7.6</ecNumber>
    </recommendedName>
    <alternativeName>
        <fullName evidence="1">RNA polymerase subunit beta</fullName>
    </alternativeName>
    <alternativeName>
        <fullName evidence="1">Transcriptase subunit beta</fullName>
    </alternativeName>
</protein>
<proteinExistence type="inferred from homology"/>
<dbReference type="EC" id="2.7.7.6" evidence="1"/>
<dbReference type="EMBL" id="CP000348">
    <property type="protein sequence ID" value="ABJ78303.1"/>
    <property type="molecule type" value="Genomic_DNA"/>
</dbReference>
<dbReference type="RefSeq" id="WP_011669621.1">
    <property type="nucleotide sequence ID" value="NC_008508.1"/>
</dbReference>
<dbReference type="SMR" id="Q054E2"/>
<dbReference type="KEGG" id="lbl:LBL_0743"/>
<dbReference type="PATRIC" id="fig|355276.3.peg.937"/>
<dbReference type="HOGENOM" id="CLU_000524_4_3_12"/>
<dbReference type="GO" id="GO:0000428">
    <property type="term" value="C:DNA-directed RNA polymerase complex"/>
    <property type="evidence" value="ECO:0007669"/>
    <property type="project" value="UniProtKB-KW"/>
</dbReference>
<dbReference type="GO" id="GO:0003677">
    <property type="term" value="F:DNA binding"/>
    <property type="evidence" value="ECO:0007669"/>
    <property type="project" value="UniProtKB-UniRule"/>
</dbReference>
<dbReference type="GO" id="GO:0003899">
    <property type="term" value="F:DNA-directed RNA polymerase activity"/>
    <property type="evidence" value="ECO:0007669"/>
    <property type="project" value="UniProtKB-UniRule"/>
</dbReference>
<dbReference type="GO" id="GO:0032549">
    <property type="term" value="F:ribonucleoside binding"/>
    <property type="evidence" value="ECO:0007669"/>
    <property type="project" value="InterPro"/>
</dbReference>
<dbReference type="GO" id="GO:0006351">
    <property type="term" value="P:DNA-templated transcription"/>
    <property type="evidence" value="ECO:0007669"/>
    <property type="project" value="UniProtKB-UniRule"/>
</dbReference>
<dbReference type="CDD" id="cd00653">
    <property type="entry name" value="RNA_pol_B_RPB2"/>
    <property type="match status" value="1"/>
</dbReference>
<dbReference type="Gene3D" id="2.40.50.100">
    <property type="match status" value="2"/>
</dbReference>
<dbReference type="Gene3D" id="2.40.50.150">
    <property type="match status" value="1"/>
</dbReference>
<dbReference type="Gene3D" id="3.90.1100.10">
    <property type="match status" value="1"/>
</dbReference>
<dbReference type="Gene3D" id="2.30.150.10">
    <property type="entry name" value="DNA-directed RNA polymerase, beta subunit, external 1 domain"/>
    <property type="match status" value="1"/>
</dbReference>
<dbReference type="Gene3D" id="2.40.270.10">
    <property type="entry name" value="DNA-directed RNA polymerase, subunit 2, domain 6"/>
    <property type="match status" value="1"/>
</dbReference>
<dbReference type="Gene3D" id="3.90.1800.10">
    <property type="entry name" value="RNA polymerase alpha subunit dimerisation domain"/>
    <property type="match status" value="1"/>
</dbReference>
<dbReference type="Gene3D" id="3.90.1110.10">
    <property type="entry name" value="RNA polymerase Rpb2, domain 2"/>
    <property type="match status" value="1"/>
</dbReference>
<dbReference type="HAMAP" id="MF_01321">
    <property type="entry name" value="RNApol_bact_RpoB"/>
    <property type="match status" value="1"/>
</dbReference>
<dbReference type="InterPro" id="IPR042107">
    <property type="entry name" value="DNA-dir_RNA_pol_bsu_ext_1_sf"/>
</dbReference>
<dbReference type="InterPro" id="IPR019462">
    <property type="entry name" value="DNA-dir_RNA_pol_bsu_external_1"/>
</dbReference>
<dbReference type="InterPro" id="IPR015712">
    <property type="entry name" value="DNA-dir_RNA_pol_su2"/>
</dbReference>
<dbReference type="InterPro" id="IPR007120">
    <property type="entry name" value="DNA-dir_RNAP_su2_dom"/>
</dbReference>
<dbReference type="InterPro" id="IPR037033">
    <property type="entry name" value="DNA-dir_RNAP_su2_hyb_sf"/>
</dbReference>
<dbReference type="InterPro" id="IPR010243">
    <property type="entry name" value="RNA_pol_bsu_bac"/>
</dbReference>
<dbReference type="InterPro" id="IPR007121">
    <property type="entry name" value="RNA_pol_bsu_CS"/>
</dbReference>
<dbReference type="InterPro" id="IPR007644">
    <property type="entry name" value="RNA_pol_bsu_protrusion"/>
</dbReference>
<dbReference type="InterPro" id="IPR007642">
    <property type="entry name" value="RNA_pol_Rpb2_2"/>
</dbReference>
<dbReference type="InterPro" id="IPR037034">
    <property type="entry name" value="RNA_pol_Rpb2_2_sf"/>
</dbReference>
<dbReference type="InterPro" id="IPR007645">
    <property type="entry name" value="RNA_pol_Rpb2_3"/>
</dbReference>
<dbReference type="InterPro" id="IPR007641">
    <property type="entry name" value="RNA_pol_Rpb2_7"/>
</dbReference>
<dbReference type="InterPro" id="IPR014724">
    <property type="entry name" value="RNA_pol_RPB2_OB-fold"/>
</dbReference>
<dbReference type="NCBIfam" id="TIGR02013">
    <property type="entry name" value="rpoB"/>
    <property type="match status" value="1"/>
</dbReference>
<dbReference type="PANTHER" id="PTHR20856">
    <property type="entry name" value="DNA-DIRECTED RNA POLYMERASE I SUBUNIT 2"/>
    <property type="match status" value="1"/>
</dbReference>
<dbReference type="Pfam" id="PF04563">
    <property type="entry name" value="RNA_pol_Rpb2_1"/>
    <property type="match status" value="1"/>
</dbReference>
<dbReference type="Pfam" id="PF04561">
    <property type="entry name" value="RNA_pol_Rpb2_2"/>
    <property type="match status" value="1"/>
</dbReference>
<dbReference type="Pfam" id="PF04565">
    <property type="entry name" value="RNA_pol_Rpb2_3"/>
    <property type="match status" value="1"/>
</dbReference>
<dbReference type="Pfam" id="PF10385">
    <property type="entry name" value="RNA_pol_Rpb2_45"/>
    <property type="match status" value="1"/>
</dbReference>
<dbReference type="Pfam" id="PF00562">
    <property type="entry name" value="RNA_pol_Rpb2_6"/>
    <property type="match status" value="1"/>
</dbReference>
<dbReference type="Pfam" id="PF04560">
    <property type="entry name" value="RNA_pol_Rpb2_7"/>
    <property type="match status" value="1"/>
</dbReference>
<dbReference type="SUPFAM" id="SSF64484">
    <property type="entry name" value="beta and beta-prime subunits of DNA dependent RNA-polymerase"/>
    <property type="match status" value="1"/>
</dbReference>
<dbReference type="PROSITE" id="PS01166">
    <property type="entry name" value="RNA_POL_BETA"/>
    <property type="match status" value="1"/>
</dbReference>